<gene>
    <name evidence="6" type="primary">ATG24</name>
    <name type="ORF">FG091571</name>
    <name type="ORF">FGRAMPH1_01T27793</name>
</gene>
<comment type="function">
    <text evidence="1 5">Sorting nexin involved in the separation or division of vacuoles throughout the entire life cycle of the cells (By similarity). Involved in retrieval of late-Golgi SNAREs from post-Golgi endosomes to the trans-Golgi network, for cytoplasm to vacuole transport (Cvt), and autophagy of large cargos including mitophagy, pexophagy and glycophagy (By similarity). Autophagy is required for proper vegetative growth, asexual/sexual reproduction, and full virulence (PubMed:28894236). Autophagy is particularly involved in the biosynthesis of deoxynivalenol (DON), an important virulence determinant (PubMed:28894236).</text>
</comment>
<comment type="subunit">
    <text evidence="1">Forms a complex with ATG20 and ATG17 (By similarity).</text>
</comment>
<comment type="subcellular location">
    <subcellularLocation>
        <location evidence="1">Cytoplasm</location>
    </subcellularLocation>
    <subcellularLocation>
        <location evidence="1">Membrane</location>
        <topology>Peripheral membrane protein</topology>
    </subcellularLocation>
    <subcellularLocation>
        <location>Endosome membrane</location>
        <topology evidence="1">Peripheral membrane protein</topology>
    </subcellularLocation>
    <text evidence="1">Endosome and other perivacuolar punctate structures (By similarity). Associates to phosphatidylinositol 3-phosphate, necessary for peripheral membrane localization to the perivacuolar punctate structures (By similarity).</text>
</comment>
<comment type="domain">
    <text evidence="1">The PX domain binds phosphatidylinositol 3-phosphate which is necessary for peripheral membrane localization to the perivacuolar punctate structures.</text>
</comment>
<comment type="disruption phenotype">
    <text evidence="5">Significantly decreases the radial growth of colonies under nutrient-rich conditions (PubMed:28894236). Strongly reduces conidiation (PubMed:28894236). Causes only mild infection in point-inoculated spikelets of flowering wheat heads and impairs the spreading to nearby spikelets (PubMed:28894236).</text>
</comment>
<comment type="similarity">
    <text evidence="7">Belongs to the sorting nexin family.</text>
</comment>
<organism>
    <name type="scientific">Gibberella zeae (strain ATCC MYA-4620 / CBS 123657 / FGSC 9075 / NRRL 31084 / PH-1)</name>
    <name type="common">Wheat head blight fungus</name>
    <name type="synonym">Fusarium graminearum</name>
    <dbReference type="NCBI Taxonomy" id="229533"/>
    <lineage>
        <taxon>Eukaryota</taxon>
        <taxon>Fungi</taxon>
        <taxon>Dikarya</taxon>
        <taxon>Ascomycota</taxon>
        <taxon>Pezizomycotina</taxon>
        <taxon>Sordariomycetes</taxon>
        <taxon>Hypocreomycetidae</taxon>
        <taxon>Hypocreales</taxon>
        <taxon>Nectriaceae</taxon>
        <taxon>Fusarium</taxon>
    </lineage>
</organism>
<feature type="chain" id="PRO_0000443923" description="Sorting nexin-4">
    <location>
        <begin position="1"/>
        <end position="460"/>
    </location>
</feature>
<feature type="domain" description="PX" evidence="3">
    <location>
        <begin position="56"/>
        <end position="178"/>
    </location>
</feature>
<feature type="region of interest" description="Disordered" evidence="4">
    <location>
        <begin position="1"/>
        <end position="53"/>
    </location>
</feature>
<feature type="coiled-coil region" evidence="2">
    <location>
        <begin position="238"/>
        <end position="266"/>
    </location>
</feature>
<feature type="coiled-coil region" evidence="2">
    <location>
        <begin position="306"/>
        <end position="337"/>
    </location>
</feature>
<feature type="coiled-coil region" evidence="2">
    <location>
        <begin position="374"/>
        <end position="403"/>
    </location>
</feature>
<feature type="compositionally biased region" description="Polar residues" evidence="4">
    <location>
        <begin position="1"/>
        <end position="16"/>
    </location>
</feature>
<dbReference type="EMBL" id="HG970335">
    <property type="protein sequence ID" value="CEF84195.1"/>
    <property type="molecule type" value="Genomic_DNA"/>
</dbReference>
<dbReference type="RefSeq" id="XP_011328628.1">
    <property type="nucleotide sequence ID" value="XM_011330326.1"/>
</dbReference>
<dbReference type="SMR" id="I1RXT2"/>
<dbReference type="FunCoup" id="I1RXT2">
    <property type="interactions" value="502"/>
</dbReference>
<dbReference type="STRING" id="229533.I1RXT2"/>
<dbReference type="KEGG" id="fgr:FGSG_09157"/>
<dbReference type="VEuPathDB" id="FungiDB:FGRAMPH1_01G27793"/>
<dbReference type="eggNOG" id="KOG2273">
    <property type="taxonomic scope" value="Eukaryota"/>
</dbReference>
<dbReference type="HOGENOM" id="CLU_027221_2_0_1"/>
<dbReference type="InParanoid" id="I1RXT2"/>
<dbReference type="OrthoDB" id="102969at110618"/>
<dbReference type="PHI-base" id="PHI:8064"/>
<dbReference type="Proteomes" id="UP000070720">
    <property type="component" value="Chromosome 4"/>
</dbReference>
<dbReference type="GO" id="GO:0005769">
    <property type="term" value="C:early endosome"/>
    <property type="evidence" value="ECO:0007669"/>
    <property type="project" value="TreeGrafter"/>
</dbReference>
<dbReference type="GO" id="GO:0010008">
    <property type="term" value="C:endosome membrane"/>
    <property type="evidence" value="ECO:0007669"/>
    <property type="project" value="UniProtKB-SubCell"/>
</dbReference>
<dbReference type="GO" id="GO:0000407">
    <property type="term" value="C:phagophore assembly site"/>
    <property type="evidence" value="ECO:0007669"/>
    <property type="project" value="TreeGrafter"/>
</dbReference>
<dbReference type="GO" id="GO:0035091">
    <property type="term" value="F:phosphatidylinositol binding"/>
    <property type="evidence" value="ECO:0007669"/>
    <property type="project" value="InterPro"/>
</dbReference>
<dbReference type="GO" id="GO:0000422">
    <property type="term" value="P:autophagy of mitochondrion"/>
    <property type="evidence" value="ECO:0007669"/>
    <property type="project" value="TreeGrafter"/>
</dbReference>
<dbReference type="GO" id="GO:0032456">
    <property type="term" value="P:endocytic recycling"/>
    <property type="evidence" value="ECO:0007669"/>
    <property type="project" value="TreeGrafter"/>
</dbReference>
<dbReference type="GO" id="GO:0034727">
    <property type="term" value="P:piecemeal microautophagy of the nucleus"/>
    <property type="evidence" value="ECO:0007669"/>
    <property type="project" value="TreeGrafter"/>
</dbReference>
<dbReference type="GO" id="GO:0015031">
    <property type="term" value="P:protein transport"/>
    <property type="evidence" value="ECO:0007669"/>
    <property type="project" value="UniProtKB-KW"/>
</dbReference>
<dbReference type="GO" id="GO:0061709">
    <property type="term" value="P:reticulophagy"/>
    <property type="evidence" value="ECO:0007669"/>
    <property type="project" value="TreeGrafter"/>
</dbReference>
<dbReference type="CDD" id="cd07628">
    <property type="entry name" value="BAR_Atg24p"/>
    <property type="match status" value="1"/>
</dbReference>
<dbReference type="CDD" id="cd06863">
    <property type="entry name" value="PX_Atg24p"/>
    <property type="match status" value="1"/>
</dbReference>
<dbReference type="FunFam" id="3.30.1520.10:FF:000035">
    <property type="entry name" value="Sorting nexin-4 protein"/>
    <property type="match status" value="1"/>
</dbReference>
<dbReference type="FunFam" id="1.20.1270.60:FF:000042">
    <property type="entry name" value="Vacuolar targeting protein Atg24"/>
    <property type="match status" value="1"/>
</dbReference>
<dbReference type="Gene3D" id="1.20.1270.60">
    <property type="entry name" value="Arfaptin homology (AH) domain/BAR domain"/>
    <property type="match status" value="1"/>
</dbReference>
<dbReference type="Gene3D" id="3.30.1520.10">
    <property type="entry name" value="Phox-like domain"/>
    <property type="match status" value="1"/>
</dbReference>
<dbReference type="InterPro" id="IPR027267">
    <property type="entry name" value="AH/BAR_dom_sf"/>
</dbReference>
<dbReference type="InterPro" id="IPR001683">
    <property type="entry name" value="PX_dom"/>
</dbReference>
<dbReference type="InterPro" id="IPR036871">
    <property type="entry name" value="PX_dom_sf"/>
</dbReference>
<dbReference type="PANTHER" id="PTHR45949">
    <property type="entry name" value="SORTING NEXIN-4"/>
    <property type="match status" value="1"/>
</dbReference>
<dbReference type="PANTHER" id="PTHR45949:SF2">
    <property type="entry name" value="SORTING NEXIN-4"/>
    <property type="match status" value="1"/>
</dbReference>
<dbReference type="Pfam" id="PF00787">
    <property type="entry name" value="PX"/>
    <property type="match status" value="1"/>
</dbReference>
<dbReference type="SMART" id="SM00312">
    <property type="entry name" value="PX"/>
    <property type="match status" value="1"/>
</dbReference>
<dbReference type="SUPFAM" id="SSF103657">
    <property type="entry name" value="BAR/IMD domain-like"/>
    <property type="match status" value="1"/>
</dbReference>
<dbReference type="SUPFAM" id="SSF64268">
    <property type="entry name" value="PX domain"/>
    <property type="match status" value="1"/>
</dbReference>
<dbReference type="PROSITE" id="PS50195">
    <property type="entry name" value="PX"/>
    <property type="match status" value="1"/>
</dbReference>
<sequence>MTATEQQQDDFSNVSWSEHVHDQQTRSVPDAEEPGHDMNAPGTGLERDAPSLGNEKLECTVDTPIKENDGTKDAFVSYLITTHSTFSSFQRSTTTVRRRFTDFVFLYKQLTRDYPAAAVPPLPDKQRMEYVRGDRFGSDFTTRRANSLQRFLSRLSLHPTLRRAPILHTFLESPDWNATMRSRGSRVSSASDPGSAGVFDNFADTFINAFTKLHRPDRRFLEVKEKSDKLDDDLGHIEKVIARVARREADLEVDLRDLAEQFQKLIPLEPHVEPAVHGFSASIEDTASHLRKLKDMTDQDYLGSLRDMQAYSIALKNLLKAREQKQLDYEQLTEYLNKSTTERDTLQSGHGGGSGAGSFLRAKIEDVRGVDHEQARRERTRKLELRVEELTHEVESARKTSDMFDDEVVKEVADFERIKRIEMKAQLGSLADSHIEFYGEVASIWEKYVEEMEKQGITSA</sequence>
<name>SNX4_GIBZE</name>
<keyword id="KW-0072">Autophagy</keyword>
<keyword id="KW-0175">Coiled coil</keyword>
<keyword id="KW-0963">Cytoplasm</keyword>
<keyword id="KW-0967">Endosome</keyword>
<keyword id="KW-0446">Lipid-binding</keyword>
<keyword id="KW-0472">Membrane</keyword>
<keyword id="KW-0653">Protein transport</keyword>
<keyword id="KW-1185">Reference proteome</keyword>
<keyword id="KW-0813">Transport</keyword>
<protein>
    <recommendedName>
        <fullName evidence="1">Sorting nexin-4</fullName>
    </recommendedName>
    <alternativeName>
        <fullName evidence="6">Autophagy-related protein 24</fullName>
    </alternativeName>
</protein>
<evidence type="ECO:0000250" key="1">
    <source>
        <dbReference type="UniProtKB" id="P47057"/>
    </source>
</evidence>
<evidence type="ECO:0000255" key="2"/>
<evidence type="ECO:0000255" key="3">
    <source>
        <dbReference type="PROSITE-ProRule" id="PRU00147"/>
    </source>
</evidence>
<evidence type="ECO:0000256" key="4">
    <source>
        <dbReference type="SAM" id="MobiDB-lite"/>
    </source>
</evidence>
<evidence type="ECO:0000269" key="5">
    <source>
    </source>
</evidence>
<evidence type="ECO:0000303" key="6">
    <source>
    </source>
</evidence>
<evidence type="ECO:0000305" key="7"/>
<reference key="1">
    <citation type="journal article" date="2007" name="Science">
        <title>The Fusarium graminearum genome reveals a link between localized polymorphism and pathogen specialization.</title>
        <authorList>
            <person name="Cuomo C.A."/>
            <person name="Gueldener U."/>
            <person name="Xu J.-R."/>
            <person name="Trail F."/>
            <person name="Turgeon B.G."/>
            <person name="Di Pietro A."/>
            <person name="Walton J.D."/>
            <person name="Ma L.-J."/>
            <person name="Baker S.E."/>
            <person name="Rep M."/>
            <person name="Adam G."/>
            <person name="Antoniw J."/>
            <person name="Baldwin T."/>
            <person name="Calvo S.E."/>
            <person name="Chang Y.-L."/>
            <person name="DeCaprio D."/>
            <person name="Gale L.R."/>
            <person name="Gnerre S."/>
            <person name="Goswami R.S."/>
            <person name="Hammond-Kosack K."/>
            <person name="Harris L.J."/>
            <person name="Hilburn K."/>
            <person name="Kennell J.C."/>
            <person name="Kroken S."/>
            <person name="Magnuson J.K."/>
            <person name="Mannhaupt G."/>
            <person name="Mauceli E.W."/>
            <person name="Mewes H.-W."/>
            <person name="Mitterbauer R."/>
            <person name="Muehlbauer G."/>
            <person name="Muensterkoetter M."/>
            <person name="Nelson D."/>
            <person name="O'Donnell K."/>
            <person name="Ouellet T."/>
            <person name="Qi W."/>
            <person name="Quesneville H."/>
            <person name="Roncero M.I.G."/>
            <person name="Seong K.-Y."/>
            <person name="Tetko I.V."/>
            <person name="Urban M."/>
            <person name="Waalwijk C."/>
            <person name="Ward T.J."/>
            <person name="Yao J."/>
            <person name="Birren B.W."/>
            <person name="Kistler H.C."/>
        </authorList>
    </citation>
    <scope>NUCLEOTIDE SEQUENCE [LARGE SCALE GENOMIC DNA]</scope>
    <source>
        <strain>ATCC MYA-4620 / CBS 123657 / FGSC 9075 / NRRL 31084 / PH-1</strain>
    </source>
</reference>
<reference key="2">
    <citation type="journal article" date="2010" name="Nature">
        <title>Comparative genomics reveals mobile pathogenicity chromosomes in Fusarium.</title>
        <authorList>
            <person name="Ma L.-J."/>
            <person name="van der Does H.C."/>
            <person name="Borkovich K.A."/>
            <person name="Coleman J.J."/>
            <person name="Daboussi M.-J."/>
            <person name="Di Pietro A."/>
            <person name="Dufresne M."/>
            <person name="Freitag M."/>
            <person name="Grabherr M."/>
            <person name="Henrissat B."/>
            <person name="Houterman P.M."/>
            <person name="Kang S."/>
            <person name="Shim W.-B."/>
            <person name="Woloshuk C."/>
            <person name="Xie X."/>
            <person name="Xu J.-R."/>
            <person name="Antoniw J."/>
            <person name="Baker S.E."/>
            <person name="Bluhm B.H."/>
            <person name="Breakspear A."/>
            <person name="Brown D.W."/>
            <person name="Butchko R.A.E."/>
            <person name="Chapman S."/>
            <person name="Coulson R."/>
            <person name="Coutinho P.M."/>
            <person name="Danchin E.G.J."/>
            <person name="Diener A."/>
            <person name="Gale L.R."/>
            <person name="Gardiner D.M."/>
            <person name="Goff S."/>
            <person name="Hammond-Kosack K.E."/>
            <person name="Hilburn K."/>
            <person name="Hua-Van A."/>
            <person name="Jonkers W."/>
            <person name="Kazan K."/>
            <person name="Kodira C.D."/>
            <person name="Koehrsen M."/>
            <person name="Kumar L."/>
            <person name="Lee Y.-H."/>
            <person name="Li L."/>
            <person name="Manners J.M."/>
            <person name="Miranda-Saavedra D."/>
            <person name="Mukherjee M."/>
            <person name="Park G."/>
            <person name="Park J."/>
            <person name="Park S.-Y."/>
            <person name="Proctor R.H."/>
            <person name="Regev A."/>
            <person name="Ruiz-Roldan M.C."/>
            <person name="Sain D."/>
            <person name="Sakthikumar S."/>
            <person name="Sykes S."/>
            <person name="Schwartz D.C."/>
            <person name="Turgeon B.G."/>
            <person name="Wapinski I."/>
            <person name="Yoder O."/>
            <person name="Young S."/>
            <person name="Zeng Q."/>
            <person name="Zhou S."/>
            <person name="Galagan J."/>
            <person name="Cuomo C.A."/>
            <person name="Kistler H.C."/>
            <person name="Rep M."/>
        </authorList>
    </citation>
    <scope>GENOME REANNOTATION</scope>
    <source>
        <strain>ATCC MYA-4620 / CBS 123657 / FGSC 9075 / NRRL 31084 / PH-1</strain>
    </source>
</reference>
<reference key="3">
    <citation type="journal article" date="2015" name="BMC Genomics">
        <title>The completed genome sequence of the pathogenic ascomycete fungus Fusarium graminearum.</title>
        <authorList>
            <person name="King R."/>
            <person name="Urban M."/>
            <person name="Hammond-Kosack M.C.U."/>
            <person name="Hassani-Pak K."/>
            <person name="Hammond-Kosack K.E."/>
        </authorList>
    </citation>
    <scope>NUCLEOTIDE SEQUENCE [LARGE SCALE GENOMIC DNA]</scope>
    <source>
        <strain>ATCC MYA-4620 / CBS 123657 / FGSC 9075 / NRRL 31084 / PH-1</strain>
    </source>
</reference>
<reference key="4">
    <citation type="journal article" date="2017" name="Sci. Rep.">
        <title>Genome-wide functional analysis reveals that autophagy is necessary for growth, sporulation, deoxynivalenol production and virulence in Fusarium graminearum.</title>
        <authorList>
            <person name="Lv W."/>
            <person name="Wang C."/>
            <person name="Yang N."/>
            <person name="Que Y."/>
            <person name="Talbot N.J."/>
            <person name="Wang Z."/>
        </authorList>
    </citation>
    <scope>IDENTIFICATION</scope>
    <scope>FUNCTION</scope>
    <scope>DISRUPTION PHENOTYPE</scope>
</reference>
<accession>I1RXT2</accession>
<proteinExistence type="inferred from homology"/>